<protein>
    <recommendedName>
        <fullName>Nucleolar pre-ribosomal-associated protein 1</fullName>
    </recommendedName>
    <alternativeName>
        <fullName>URB1 ribosome biogenesis 1 homolog</fullName>
    </alternativeName>
</protein>
<name>NPA1P_MOUSE</name>
<accession>Q571H0</accession>
<accession>Q9CYN4</accession>
<dbReference type="EMBL" id="AK017495">
    <property type="protein sequence ID" value="BAB30774.1"/>
    <property type="molecule type" value="mRNA"/>
</dbReference>
<dbReference type="EMBL" id="AC126671">
    <property type="status" value="NOT_ANNOTATED_CDS"/>
    <property type="molecule type" value="Genomic_DNA"/>
</dbReference>
<dbReference type="EMBL" id="AC134560">
    <property type="status" value="NOT_ANNOTATED_CDS"/>
    <property type="molecule type" value="Genomic_DNA"/>
</dbReference>
<dbReference type="EMBL" id="AK220219">
    <property type="protein sequence ID" value="BAD90144.1"/>
    <property type="molecule type" value="mRNA"/>
</dbReference>
<dbReference type="RefSeq" id="NP_083773.1">
    <property type="nucleotide sequence ID" value="NM_029497.1"/>
</dbReference>
<dbReference type="SMR" id="Q571H0"/>
<dbReference type="BioGRID" id="228935">
    <property type="interactions" value="2"/>
</dbReference>
<dbReference type="FunCoup" id="Q571H0">
    <property type="interactions" value="1726"/>
</dbReference>
<dbReference type="STRING" id="10090.ENSMUSP00000114717"/>
<dbReference type="GlyGen" id="Q571H0">
    <property type="glycosylation" value="4 sites, 1 O-linked glycan (2 sites)"/>
</dbReference>
<dbReference type="iPTMnet" id="Q571H0"/>
<dbReference type="PhosphoSitePlus" id="Q571H0"/>
<dbReference type="PaxDb" id="10090-ENSMUSP00000114717"/>
<dbReference type="PeptideAtlas" id="Q571H0"/>
<dbReference type="ProteomicsDB" id="293943">
    <molecule id="Q571H0-1"/>
</dbReference>
<dbReference type="ProteomicsDB" id="293944">
    <molecule id="Q571H0-2"/>
</dbReference>
<dbReference type="Pumba" id="Q571H0"/>
<dbReference type="GeneID" id="207932"/>
<dbReference type="KEGG" id="mmu:207932"/>
<dbReference type="UCSC" id="uc007zwo.2">
    <molecule id="Q571H0-2"/>
    <property type="organism name" value="mouse"/>
</dbReference>
<dbReference type="AGR" id="MGI:2146468"/>
<dbReference type="CTD" id="9875"/>
<dbReference type="MGI" id="MGI:2146468">
    <property type="gene designation" value="Urb1"/>
</dbReference>
<dbReference type="eggNOG" id="KOG1791">
    <property type="taxonomic scope" value="Eukaryota"/>
</dbReference>
<dbReference type="InParanoid" id="Q571H0"/>
<dbReference type="OrthoDB" id="72892at2759"/>
<dbReference type="BioGRID-ORCS" id="207932">
    <property type="hits" value="29 hits in 80 CRISPR screens"/>
</dbReference>
<dbReference type="PRO" id="PR:Q571H0"/>
<dbReference type="Proteomes" id="UP000000589">
    <property type="component" value="Unplaced"/>
</dbReference>
<dbReference type="RNAct" id="Q571H0">
    <property type="molecule type" value="protein"/>
</dbReference>
<dbReference type="GO" id="GO:0005730">
    <property type="term" value="C:nucleolus"/>
    <property type="evidence" value="ECO:0000250"/>
    <property type="project" value="UniProtKB"/>
</dbReference>
<dbReference type="InterPro" id="IPR016024">
    <property type="entry name" value="ARM-type_fold"/>
</dbReference>
<dbReference type="InterPro" id="IPR032436">
    <property type="entry name" value="NopRA1_C"/>
</dbReference>
<dbReference type="InterPro" id="IPR021714">
    <property type="entry name" value="Npa1_N"/>
</dbReference>
<dbReference type="InterPro" id="IPR039844">
    <property type="entry name" value="URB1"/>
</dbReference>
<dbReference type="PANTHER" id="PTHR13500:SF0">
    <property type="entry name" value="NUCLEOLAR PRE-RIBOSOMAL-ASSOCIATED PROTEIN 1"/>
    <property type="match status" value="1"/>
</dbReference>
<dbReference type="PANTHER" id="PTHR13500">
    <property type="entry name" value="NUCLEOLAR PRERIBOSOMAL-ASSOCIATED PROTEIN 1"/>
    <property type="match status" value="1"/>
</dbReference>
<dbReference type="Pfam" id="PF16201">
    <property type="entry name" value="NopRA1"/>
    <property type="match status" value="1"/>
</dbReference>
<dbReference type="Pfam" id="PF11707">
    <property type="entry name" value="Npa1"/>
    <property type="match status" value="1"/>
</dbReference>
<dbReference type="SUPFAM" id="SSF48371">
    <property type="entry name" value="ARM repeat"/>
    <property type="match status" value="1"/>
</dbReference>
<gene>
    <name type="primary">Urb1</name>
    <name type="synonym">Kiaa0539</name>
    <name type="synonym">Npa1</name>
</gene>
<keyword id="KW-0025">Alternative splicing</keyword>
<keyword id="KW-0539">Nucleus</keyword>
<keyword id="KW-0597">Phosphoprotein</keyword>
<keyword id="KW-1185">Reference proteome</keyword>
<sequence length="2274" mass="254614">MGVPKRKASEGPSSAASPAGTVKRTRAEEFTGVRFKTLLKDAQGPGPALEAFVSAAKKLPQEDMCDVVEGYIKISMECAEIFQLLSGEKRPESEMLLIFQAFEAILLRTASDLTHFHVVGANIVKKLLYNHMKLLCESLYASGYRMARACLDLMTAMVTQGPEAARDVCSSLDLNKKALFALVTKRDSKGVHDVRLAYIQFALSFLIAGDDNTIGQVLEIKEFIPCIFSSGIKEDKISTINILLSTLKTKVIHNKNITKTQKVRFFTGQFLNHIAALYNWNGITDVTPEKPEISAEEAGKAMVRDLVHNFLMDLCCSRKHGISFYDASLGTSGRGGNLTLLHFLLSLKTAAGDDLVASLVVSILKVCPDLLTKYFKEVTFSFLPRVKSTWLNNVKLLNKIYEAQPEISPAFWTREFIPLPRLLAMVMVTTVPLVCNKIMFTQALNLDSIPVKHSALSLISDILKRALKTVDHCLDKETWQDSDVYTAEMMEEFVQLFREALGKILPDLNTVIWVWQSFKKQEIKEDHEKGKKSSSKTPAVSKAAQHDVAETILLKSVLLQVICLYQQVVPHVIMQYNFDFSKLLKGIISEQGPSQEVPPILQHHMLKVALELPANKFLWLKAQEGPEAEIIGGERSVFYLLMKMFVNSNHLQLKSSTKLLIMKILRDTGVFEHTWRELELWLEHLDSTAEERKEAVIQFLERILLTLVMNPYSYTDKASEFVQEASTLQASMGKQDADDVSIPISHIDDVLDMVDVLVEGSEGLDEDIGFLLNEDMILLTFPFSALVPAALEARNKLLLGTDCEAGESIMAYMTAVLTDLLHTQRDPLALCLLLQSYDKFEPVSLLCGQQLAQFHRYYSLWIPAQAQEALPLQVSSSSGPCTLPPSSCFSTLLQTAYESQTLGDKSVQAQLLAAVPSLALQHMLRSAKQVLLYLKSTVENFSQLGRSVGPALLQSLLGLLKQLVIHAERLDAQNQQKLEAARAESDLFLDMESVASLELATDKTIEELLLAILKHPTLETWFLALEQKALPPHTLSPILVKLLAAHFSAGVLQLLVASSPILHKLGQLGLLAKYSEAITQSVLIELRTRTLNSTSTPKTLPQLEALRELHPYMEGVQIREVTLALLALPEAHLLTQQGTQSLGKERHLSSLGKTLVQLLASSHQDQLQSSELLWCAEYVRGLGALLPTLAEHELDTVFLQTLQKDPVLAPVVPEGVLEYCLARRTQTALGIASLLLQYSGTHLVKFELWCGQPGVGPTLQEHLDDFFPLIHVYLQHRAQGSFMRPTGVSSAVTPVLKALWRQVRDRFFHITGPSKDALHLEALAQLIPFARTKDLHVLMDHLPNTLRTLSNHKSWTLADSVSAALAESAEELGSWRKTLLRSCIQWLAVSFSGREPEDENTQEHEKAMLVRLSELLHAVKEVDPGDWQQFVKTGLKFRYHDLTFLKTLLSATKLLYGPESSGRTKLVQLSVVHMMLTQHSLFLPTMLSSEEEETPDSGVKETLLDLMSTVVRLCPSVCQSSHFAVLLGTYSATLSVLDQKILLLLRAYEQNNLSLISFRVLLWGPAAVEHHKTCRSLGKSLWQQPSVGDILRLLDPDRMMQTILHFPQYRKLLPTEDTGEPLVFKDKTARVDLDSLYDPCFLLHLFGELTRPEFVVDCRKFLDSNALGLTVAALSSYDPQMRAAAYYVLAAYYSHLEGARFREQSQVLYLLDVVRNGIRTPNLRLPFTVALFIAKAAVQILKPEEHMYWKISKFLLSHENLNMDKLPGFYQFFYSSDFQQKTEQEWVLEILRQGIRDKHCYELCSRRGVFHIILSFFNSPLCDEVAQNWILEILQNVAHITRSAYEVIRDYSLLTWVLHILESRFVETQLLSNVISLLHTLWVTNLGNKAPEERSQPPGQVGSQESEKMLALHMVSEFLYVLIALTKHLRPTLASAQLMNFFWTLESVLSYRATIIKLFKDMGRFTVNKVALSTKDVLILLHKWSLIERDTKLQGELKAVIEQHQAKDLMKMLKDKSRPVVAAQARGPRGRKRRHGGLEETAEPQLEASCLEKCKDLLRATLTHWGPGDPLPGPTQGSVGQTIPKSKTLSSAHAAVSLVASWVLRSLAERPVSRAEVTRLLDWLKSHILPQPMVVADLLGDSAVKTGIFKLYNHHCSAQGLVGPAQDVACKFSTVMLQLLVAQGRKESPFHSVAEALCLDSLNEKEEAKRAPAAFLVSLYVKDMWLGAQQPDTFLAHIRMVCEAAKDVPLDEPEAIVVLCRNVDSSAQCLTRSR</sequence>
<feature type="chain" id="PRO_0000307935" description="Nucleolar pre-ribosomal-associated protein 1">
    <location>
        <begin position="1"/>
        <end position="2274"/>
    </location>
</feature>
<feature type="region of interest" description="Disordered" evidence="3">
    <location>
        <begin position="1"/>
        <end position="23"/>
    </location>
</feature>
<feature type="region of interest" description="Disordered" evidence="3">
    <location>
        <begin position="2020"/>
        <end position="2042"/>
    </location>
</feature>
<feature type="compositionally biased region" description="Low complexity" evidence="3">
    <location>
        <begin position="10"/>
        <end position="20"/>
    </location>
</feature>
<feature type="modified residue" description="Phosphoserine" evidence="6">
    <location>
        <position position="17"/>
    </location>
</feature>
<feature type="modified residue" description="Phosphoserine" evidence="2">
    <location>
        <position position="1141"/>
    </location>
</feature>
<feature type="splice variant" id="VSP_028877" description="In isoform 2." evidence="4">
    <original>EFIPCIFSSG</original>
    <variation>GGSALSLGDV</variation>
    <location>
        <begin position="222"/>
        <end position="231"/>
    </location>
</feature>
<feature type="splice variant" id="VSP_028878" description="In isoform 2." evidence="4">
    <location>
        <begin position="232"/>
        <end position="2274"/>
    </location>
</feature>
<feature type="sequence conflict" description="In Ref. 1; BAB30774." evidence="5" ref="1">
    <original>R</original>
    <variation>Q</variation>
    <location>
        <position position="26"/>
    </location>
</feature>
<reference key="1">
    <citation type="journal article" date="2005" name="Science">
        <title>The transcriptional landscape of the mammalian genome.</title>
        <authorList>
            <person name="Carninci P."/>
            <person name="Kasukawa T."/>
            <person name="Katayama S."/>
            <person name="Gough J."/>
            <person name="Frith M.C."/>
            <person name="Maeda N."/>
            <person name="Oyama R."/>
            <person name="Ravasi T."/>
            <person name="Lenhard B."/>
            <person name="Wells C."/>
            <person name="Kodzius R."/>
            <person name="Shimokawa K."/>
            <person name="Bajic V.B."/>
            <person name="Brenner S.E."/>
            <person name="Batalov S."/>
            <person name="Forrest A.R."/>
            <person name="Zavolan M."/>
            <person name="Davis M.J."/>
            <person name="Wilming L.G."/>
            <person name="Aidinis V."/>
            <person name="Allen J.E."/>
            <person name="Ambesi-Impiombato A."/>
            <person name="Apweiler R."/>
            <person name="Aturaliya R.N."/>
            <person name="Bailey T.L."/>
            <person name="Bansal M."/>
            <person name="Baxter L."/>
            <person name="Beisel K.W."/>
            <person name="Bersano T."/>
            <person name="Bono H."/>
            <person name="Chalk A.M."/>
            <person name="Chiu K.P."/>
            <person name="Choudhary V."/>
            <person name="Christoffels A."/>
            <person name="Clutterbuck D.R."/>
            <person name="Crowe M.L."/>
            <person name="Dalla E."/>
            <person name="Dalrymple B.P."/>
            <person name="de Bono B."/>
            <person name="Della Gatta G."/>
            <person name="di Bernardo D."/>
            <person name="Down T."/>
            <person name="Engstrom P."/>
            <person name="Fagiolini M."/>
            <person name="Faulkner G."/>
            <person name="Fletcher C.F."/>
            <person name="Fukushima T."/>
            <person name="Furuno M."/>
            <person name="Futaki S."/>
            <person name="Gariboldi M."/>
            <person name="Georgii-Hemming P."/>
            <person name="Gingeras T.R."/>
            <person name="Gojobori T."/>
            <person name="Green R.E."/>
            <person name="Gustincich S."/>
            <person name="Harbers M."/>
            <person name="Hayashi Y."/>
            <person name="Hensch T.K."/>
            <person name="Hirokawa N."/>
            <person name="Hill D."/>
            <person name="Huminiecki L."/>
            <person name="Iacono M."/>
            <person name="Ikeo K."/>
            <person name="Iwama A."/>
            <person name="Ishikawa T."/>
            <person name="Jakt M."/>
            <person name="Kanapin A."/>
            <person name="Katoh M."/>
            <person name="Kawasawa Y."/>
            <person name="Kelso J."/>
            <person name="Kitamura H."/>
            <person name="Kitano H."/>
            <person name="Kollias G."/>
            <person name="Krishnan S.P."/>
            <person name="Kruger A."/>
            <person name="Kummerfeld S.K."/>
            <person name="Kurochkin I.V."/>
            <person name="Lareau L.F."/>
            <person name="Lazarevic D."/>
            <person name="Lipovich L."/>
            <person name="Liu J."/>
            <person name="Liuni S."/>
            <person name="McWilliam S."/>
            <person name="Madan Babu M."/>
            <person name="Madera M."/>
            <person name="Marchionni L."/>
            <person name="Matsuda H."/>
            <person name="Matsuzawa S."/>
            <person name="Miki H."/>
            <person name="Mignone F."/>
            <person name="Miyake S."/>
            <person name="Morris K."/>
            <person name="Mottagui-Tabar S."/>
            <person name="Mulder N."/>
            <person name="Nakano N."/>
            <person name="Nakauchi H."/>
            <person name="Ng P."/>
            <person name="Nilsson R."/>
            <person name="Nishiguchi S."/>
            <person name="Nishikawa S."/>
            <person name="Nori F."/>
            <person name="Ohara O."/>
            <person name="Okazaki Y."/>
            <person name="Orlando V."/>
            <person name="Pang K.C."/>
            <person name="Pavan W.J."/>
            <person name="Pavesi G."/>
            <person name="Pesole G."/>
            <person name="Petrovsky N."/>
            <person name="Piazza S."/>
            <person name="Reed J."/>
            <person name="Reid J.F."/>
            <person name="Ring B.Z."/>
            <person name="Ringwald M."/>
            <person name="Rost B."/>
            <person name="Ruan Y."/>
            <person name="Salzberg S.L."/>
            <person name="Sandelin A."/>
            <person name="Schneider C."/>
            <person name="Schoenbach C."/>
            <person name="Sekiguchi K."/>
            <person name="Semple C.A."/>
            <person name="Seno S."/>
            <person name="Sessa L."/>
            <person name="Sheng Y."/>
            <person name="Shibata Y."/>
            <person name="Shimada H."/>
            <person name="Shimada K."/>
            <person name="Silva D."/>
            <person name="Sinclair B."/>
            <person name="Sperling S."/>
            <person name="Stupka E."/>
            <person name="Sugiura K."/>
            <person name="Sultana R."/>
            <person name="Takenaka Y."/>
            <person name="Taki K."/>
            <person name="Tammoja K."/>
            <person name="Tan S.L."/>
            <person name="Tang S."/>
            <person name="Taylor M.S."/>
            <person name="Tegner J."/>
            <person name="Teichmann S.A."/>
            <person name="Ueda H.R."/>
            <person name="van Nimwegen E."/>
            <person name="Verardo R."/>
            <person name="Wei C.L."/>
            <person name="Yagi K."/>
            <person name="Yamanishi H."/>
            <person name="Zabarovsky E."/>
            <person name="Zhu S."/>
            <person name="Zimmer A."/>
            <person name="Hide W."/>
            <person name="Bult C."/>
            <person name="Grimmond S.M."/>
            <person name="Teasdale R.D."/>
            <person name="Liu E.T."/>
            <person name="Brusic V."/>
            <person name="Quackenbush J."/>
            <person name="Wahlestedt C."/>
            <person name="Mattick J.S."/>
            <person name="Hume D.A."/>
            <person name="Kai C."/>
            <person name="Sasaki D."/>
            <person name="Tomaru Y."/>
            <person name="Fukuda S."/>
            <person name="Kanamori-Katayama M."/>
            <person name="Suzuki M."/>
            <person name="Aoki J."/>
            <person name="Arakawa T."/>
            <person name="Iida J."/>
            <person name="Imamura K."/>
            <person name="Itoh M."/>
            <person name="Kato T."/>
            <person name="Kawaji H."/>
            <person name="Kawagashira N."/>
            <person name="Kawashima T."/>
            <person name="Kojima M."/>
            <person name="Kondo S."/>
            <person name="Konno H."/>
            <person name="Nakano K."/>
            <person name="Ninomiya N."/>
            <person name="Nishio T."/>
            <person name="Okada M."/>
            <person name="Plessy C."/>
            <person name="Shibata K."/>
            <person name="Shiraki T."/>
            <person name="Suzuki S."/>
            <person name="Tagami M."/>
            <person name="Waki K."/>
            <person name="Watahiki A."/>
            <person name="Okamura-Oho Y."/>
            <person name="Suzuki H."/>
            <person name="Kawai J."/>
            <person name="Hayashizaki Y."/>
        </authorList>
    </citation>
    <scope>NUCLEOTIDE SEQUENCE [LARGE SCALE MRNA] (ISOFORM 2)</scope>
    <source>
        <strain>C57BL/6J</strain>
        <tissue>Embryo</tissue>
    </source>
</reference>
<reference key="2">
    <citation type="journal article" date="2009" name="PLoS Biol.">
        <title>Lineage-specific biology revealed by a finished genome assembly of the mouse.</title>
        <authorList>
            <person name="Church D.M."/>
            <person name="Goodstadt L."/>
            <person name="Hillier L.W."/>
            <person name="Zody M.C."/>
            <person name="Goldstein S."/>
            <person name="She X."/>
            <person name="Bult C.J."/>
            <person name="Agarwala R."/>
            <person name="Cherry J.L."/>
            <person name="DiCuccio M."/>
            <person name="Hlavina W."/>
            <person name="Kapustin Y."/>
            <person name="Meric P."/>
            <person name="Maglott D."/>
            <person name="Birtle Z."/>
            <person name="Marques A.C."/>
            <person name="Graves T."/>
            <person name="Zhou S."/>
            <person name="Teague B."/>
            <person name="Potamousis K."/>
            <person name="Churas C."/>
            <person name="Place M."/>
            <person name="Herschleb J."/>
            <person name="Runnheim R."/>
            <person name="Forrest D."/>
            <person name="Amos-Landgraf J."/>
            <person name="Schwartz D.C."/>
            <person name="Cheng Z."/>
            <person name="Lindblad-Toh K."/>
            <person name="Eichler E.E."/>
            <person name="Ponting C.P."/>
        </authorList>
    </citation>
    <scope>NUCLEOTIDE SEQUENCE [LARGE SCALE GENOMIC DNA]</scope>
    <source>
        <strain>C57BL/6J</strain>
    </source>
</reference>
<reference key="3">
    <citation type="submission" date="2005-02" db="EMBL/GenBank/DDBJ databases">
        <title>Prediction of the coding sequences of mouse homologues of KIAA gene. The complete nucleotide sequences of mouse KIAA-homologous cDNAs identified by screening of terminal sequences of cDNA clones randomly sampled from size-fractionated libraries.</title>
        <authorList>
            <person name="Okazaki N."/>
            <person name="Kikuno R.F."/>
            <person name="Ohara R."/>
            <person name="Inamoto S."/>
            <person name="Nagase T."/>
            <person name="Ohara O."/>
            <person name="Koga H."/>
        </authorList>
    </citation>
    <scope>NUCLEOTIDE SEQUENCE [LARGE SCALE MRNA] OF 1148-2274 (ISOFORM 1)</scope>
    <source>
        <tissue>Spleen</tissue>
    </source>
</reference>
<reference key="4">
    <citation type="journal article" date="2010" name="Cell">
        <title>A tissue-specific atlas of mouse protein phosphorylation and expression.</title>
        <authorList>
            <person name="Huttlin E.L."/>
            <person name="Jedrychowski M.P."/>
            <person name="Elias J.E."/>
            <person name="Goswami T."/>
            <person name="Rad R."/>
            <person name="Beausoleil S.A."/>
            <person name="Villen J."/>
            <person name="Haas W."/>
            <person name="Sowa M.E."/>
            <person name="Gygi S.P."/>
        </authorList>
    </citation>
    <scope>PHOSPHORYLATION [LARGE SCALE ANALYSIS] AT SER-17</scope>
    <scope>IDENTIFICATION BY MASS SPECTROMETRY [LARGE SCALE ANALYSIS]</scope>
    <source>
        <tissue>Testis</tissue>
    </source>
</reference>
<evidence type="ECO:0000250" key="1"/>
<evidence type="ECO:0000250" key="2">
    <source>
        <dbReference type="UniProtKB" id="O60287"/>
    </source>
</evidence>
<evidence type="ECO:0000256" key="3">
    <source>
        <dbReference type="SAM" id="MobiDB-lite"/>
    </source>
</evidence>
<evidence type="ECO:0000303" key="4">
    <source>
    </source>
</evidence>
<evidence type="ECO:0000305" key="5"/>
<evidence type="ECO:0007744" key="6">
    <source>
    </source>
</evidence>
<organism>
    <name type="scientific">Mus musculus</name>
    <name type="common">Mouse</name>
    <dbReference type="NCBI Taxonomy" id="10090"/>
    <lineage>
        <taxon>Eukaryota</taxon>
        <taxon>Metazoa</taxon>
        <taxon>Chordata</taxon>
        <taxon>Craniata</taxon>
        <taxon>Vertebrata</taxon>
        <taxon>Euteleostomi</taxon>
        <taxon>Mammalia</taxon>
        <taxon>Eutheria</taxon>
        <taxon>Euarchontoglires</taxon>
        <taxon>Glires</taxon>
        <taxon>Rodentia</taxon>
        <taxon>Myomorpha</taxon>
        <taxon>Muroidea</taxon>
        <taxon>Muridae</taxon>
        <taxon>Murinae</taxon>
        <taxon>Mus</taxon>
        <taxon>Mus</taxon>
    </lineage>
</organism>
<comment type="subcellular location">
    <subcellularLocation>
        <location evidence="1">Nucleus</location>
        <location evidence="1">Nucleolus</location>
    </subcellularLocation>
</comment>
<comment type="alternative products">
    <event type="alternative splicing"/>
    <isoform>
        <id>Q571H0-1</id>
        <name>1</name>
        <sequence type="displayed"/>
    </isoform>
    <isoform>
        <id>Q571H0-2</id>
        <name>2</name>
        <sequence type="described" ref="VSP_028877 VSP_028878"/>
    </isoform>
</comment>
<proteinExistence type="evidence at protein level"/>